<proteinExistence type="inferred from homology"/>
<reference key="1">
    <citation type="journal article" date="1993" name="J. Gen. Virol.">
        <title>Complete nucleotide sequence of pepper huasteco virus: analysis and comparison with bipartite geminiviruses.</title>
        <authorList>
            <person name="Torres-Pacheco I."/>
            <person name="Garzon-Tiznado J.A."/>
            <person name="Herrera-Estrella L."/>
            <person name="Rivera-Bustamante R.F."/>
        </authorList>
    </citation>
    <scope>NUCLEOTIDE SEQUENCE [GENOMIC DNA]</scope>
</reference>
<accession>Q06912</accession>
<sequence>MPKRDAPWRLTAGTAKISRTGNNSRALIMGPSTSRASAWVNRPMYRKPRIYRMYRTPDVPKGCEGPCKVQSFEQRHDVSHVGKVICISDVTRGNGITHRVGKRFCVKSVYILGKIWMDENIKLKNHTNSVMFWLVRDRRPYGTPMDFGQVFNMYDNEPSTATVKNDLRDRYQVMHRFYAKVTGGQYASNEQALVRRFWKVNNHVVYNHQEAGKYENHTENALLLYMACTHASNPVYATLKIRVYFYDSIMN</sequence>
<dbReference type="EMBL" id="X70418">
    <property type="protein sequence ID" value="CAA49855.1"/>
    <property type="molecule type" value="Genomic_DNA"/>
</dbReference>
<dbReference type="PIR" id="JQ2299">
    <property type="entry name" value="JQ2299"/>
</dbReference>
<dbReference type="PIR" id="S31874">
    <property type="entry name" value="S31874"/>
</dbReference>
<dbReference type="RefSeq" id="NP_040320.1">
    <property type="nucleotide sequence ID" value="NC_001359.1"/>
</dbReference>
<dbReference type="SMR" id="Q06912"/>
<dbReference type="GeneID" id="988143"/>
<dbReference type="KEGG" id="vg:988143"/>
<dbReference type="OrthoDB" id="5720at10239"/>
<dbReference type="Proteomes" id="UP000002321">
    <property type="component" value="Genome"/>
</dbReference>
<dbReference type="GO" id="GO:0043657">
    <property type="term" value="C:host cell"/>
    <property type="evidence" value="ECO:0007669"/>
    <property type="project" value="GOC"/>
</dbReference>
<dbReference type="GO" id="GO:0042025">
    <property type="term" value="C:host cell nucleus"/>
    <property type="evidence" value="ECO:0007669"/>
    <property type="project" value="UniProtKB-SubCell"/>
</dbReference>
<dbReference type="GO" id="GO:0039615">
    <property type="term" value="C:T=1 icosahedral viral capsid"/>
    <property type="evidence" value="ECO:0007669"/>
    <property type="project" value="UniProtKB-KW"/>
</dbReference>
<dbReference type="GO" id="GO:0003677">
    <property type="term" value="F:DNA binding"/>
    <property type="evidence" value="ECO:0007669"/>
    <property type="project" value="UniProtKB-KW"/>
</dbReference>
<dbReference type="GO" id="GO:0005198">
    <property type="term" value="F:structural molecule activity"/>
    <property type="evidence" value="ECO:0007669"/>
    <property type="project" value="InterPro"/>
</dbReference>
<dbReference type="GO" id="GO:0008270">
    <property type="term" value="F:zinc ion binding"/>
    <property type="evidence" value="ECO:0007669"/>
    <property type="project" value="UniProtKB-KW"/>
</dbReference>
<dbReference type="GO" id="GO:0046718">
    <property type="term" value="P:symbiont entry into host cell"/>
    <property type="evidence" value="ECO:0007669"/>
    <property type="project" value="UniProtKB-KW"/>
</dbReference>
<dbReference type="GO" id="GO:0075732">
    <property type="term" value="P:viral penetration into host nucleus"/>
    <property type="evidence" value="ECO:0007669"/>
    <property type="project" value="UniProtKB-KW"/>
</dbReference>
<dbReference type="Gene3D" id="2.60.120.20">
    <property type="match status" value="1"/>
</dbReference>
<dbReference type="InterPro" id="IPR000650">
    <property type="entry name" value="Gem_coat_AR1"/>
</dbReference>
<dbReference type="InterPro" id="IPR000263">
    <property type="entry name" value="GV_A/BR1_coat"/>
</dbReference>
<dbReference type="InterPro" id="IPR029053">
    <property type="entry name" value="Viral_coat"/>
</dbReference>
<dbReference type="Pfam" id="PF00844">
    <property type="entry name" value="Gemini_coat"/>
    <property type="match status" value="1"/>
</dbReference>
<dbReference type="PRINTS" id="PR00224">
    <property type="entry name" value="GEMCOATAR1"/>
</dbReference>
<dbReference type="PRINTS" id="PR00223">
    <property type="entry name" value="GEMCOATARBR1"/>
</dbReference>
<evidence type="ECO:0000250" key="1"/>
<evidence type="ECO:0000255" key="2"/>
<evidence type="ECO:0000305" key="3"/>
<gene>
    <name type="ORF">AR1</name>
    <name type="ORF">AV1</name>
</gene>
<keyword id="KW-0167">Capsid protein</keyword>
<keyword id="KW-0238">DNA-binding</keyword>
<keyword id="KW-1048">Host nucleus</keyword>
<keyword id="KW-0945">Host-virus interaction</keyword>
<keyword id="KW-0479">Metal-binding</keyword>
<keyword id="KW-1185">Reference proteome</keyword>
<keyword id="KW-1140">T=1 icosahedral capsid protein</keyword>
<keyword id="KW-1163">Viral penetration into host nucleus</keyword>
<keyword id="KW-0946">Virion</keyword>
<keyword id="KW-1160">Virus entry into host cell</keyword>
<keyword id="KW-0862">Zinc</keyword>
<keyword id="KW-0863">Zinc-finger</keyword>
<comment type="function">
    <text>Encapsidates the viral DNA into characteristic twinned ('geminate') particles. Binds the genomic viral ssDNA and shuttles it into and out of the cell nucleus. The CP of bipartite geminiviruses is not required for cell-to-cell or systemic movement.</text>
</comment>
<comment type="subunit">
    <text evidence="1">Homomultimer. Binds to single-stranded and double-stranded viral DNA. Interacts (via nuclear localization signals) with host importin alpha-1a (By similarity).</text>
</comment>
<comment type="subcellular location">
    <subcellularLocation>
        <location evidence="3">Virion</location>
    </subcellularLocation>
    <subcellularLocation>
        <location evidence="1">Host nucleus</location>
    </subcellularLocation>
    <text evidence="1">It is actively transported into the host cell nucleus. It may be exported out of the nucleus through a nuclear export signal for cell-to-cell movement and spread (By similarity).</text>
</comment>
<comment type="similarity">
    <text evidence="3">Belongs to the geminiviridae capsid protein family.</text>
</comment>
<feature type="chain" id="PRO_0000222189" description="Capsid protein">
    <location>
        <begin position="1"/>
        <end position="251"/>
    </location>
</feature>
<feature type="zinc finger region" evidence="2">
    <location>
        <begin position="63"/>
        <end position="80"/>
    </location>
</feature>
<feature type="short sequence motif" description="Bipartite nuclear localization signal" evidence="2">
    <location>
        <begin position="3"/>
        <end position="20"/>
    </location>
</feature>
<feature type="short sequence motif" description="Nuclear localization signal" evidence="2">
    <location>
        <begin position="35"/>
        <end position="49"/>
    </location>
</feature>
<feature type="short sequence motif" description="Nuclear export signal" evidence="2">
    <location>
        <begin position="96"/>
        <end position="117"/>
    </location>
</feature>
<feature type="short sequence motif" description="Bipartite nuclear localization signal" evidence="2">
    <location>
        <begin position="195"/>
        <end position="242"/>
    </location>
</feature>
<organismHost>
    <name type="scientific">Capsicum annuum</name>
    <name type="common">Capsicum pepper</name>
    <dbReference type="NCBI Taxonomy" id="4072"/>
</organismHost>
<protein>
    <recommendedName>
        <fullName>Capsid protein</fullName>
    </recommendedName>
    <alternativeName>
        <fullName>Coat protein</fullName>
        <shortName>CP</shortName>
    </alternativeName>
</protein>
<name>CAPSD_PHUV</name>
<organism>
    <name type="scientific">Pepper huasteco yellow vein virus</name>
    <name type="common">PHYVV</name>
    <name type="synonym">Pepper huasteco virus</name>
    <dbReference type="NCBI Taxonomy" id="223303"/>
    <lineage>
        <taxon>Viruses</taxon>
        <taxon>Monodnaviria</taxon>
        <taxon>Shotokuvirae</taxon>
        <taxon>Cressdnaviricota</taxon>
        <taxon>Repensiviricetes</taxon>
        <taxon>Geplafuvirales</taxon>
        <taxon>Geminiviridae</taxon>
        <taxon>Begomovirus</taxon>
    </lineage>
</organism>